<sequence>MKHLTEMVRQHKEGKTNGIYAVCSAHPLVLEAAIRYASANQTPLLIEATSNQVDQFGGYTGMTPADFRGFVCQLADSLNFPQDALILGGDHLGPNRWQNLPAAQAMANADDLIKSYVAAGFKKIHLDCSMSCQDDPIPLTDDIVAERAARLAKVAEETCREHFGAADLEYVIGTEVPVPGGAHETLSELAVTTPDAARATLEAHRHAFEKQGLSAIWPRIIALVVQPGVEFDHTNVIDYQPAKATALSQMVENYETLIFEAHSTDYQTPQSLRQLVIDHFAILKVGPALTFALREALFSLAAIEEELVPAKACSGLRQVLENVMLDRPEYWQSHYHGDGNARRLARGYSYSDRVRYYWPDSQIDDAFAHLVRNLADSPIPLPLISQYLPLQYVKVRSGELQPTPRELIINHIQDILAQYHTACEGQ</sequence>
<proteinExistence type="inferred from homology"/>
<accession>B7NKK3</accession>
<reference key="1">
    <citation type="journal article" date="2009" name="PLoS Genet.">
        <title>Organised genome dynamics in the Escherichia coli species results in highly diverse adaptive paths.</title>
        <authorList>
            <person name="Touchon M."/>
            <person name="Hoede C."/>
            <person name="Tenaillon O."/>
            <person name="Barbe V."/>
            <person name="Baeriswyl S."/>
            <person name="Bidet P."/>
            <person name="Bingen E."/>
            <person name="Bonacorsi S."/>
            <person name="Bouchier C."/>
            <person name="Bouvet O."/>
            <person name="Calteau A."/>
            <person name="Chiapello H."/>
            <person name="Clermont O."/>
            <person name="Cruveiller S."/>
            <person name="Danchin A."/>
            <person name="Diard M."/>
            <person name="Dossat C."/>
            <person name="Karoui M.E."/>
            <person name="Frapy E."/>
            <person name="Garry L."/>
            <person name="Ghigo J.M."/>
            <person name="Gilles A.M."/>
            <person name="Johnson J."/>
            <person name="Le Bouguenec C."/>
            <person name="Lescat M."/>
            <person name="Mangenot S."/>
            <person name="Martinez-Jehanne V."/>
            <person name="Matic I."/>
            <person name="Nassif X."/>
            <person name="Oztas S."/>
            <person name="Petit M.A."/>
            <person name="Pichon C."/>
            <person name="Rouy Z."/>
            <person name="Ruf C.S."/>
            <person name="Schneider D."/>
            <person name="Tourret J."/>
            <person name="Vacherie B."/>
            <person name="Vallenet D."/>
            <person name="Medigue C."/>
            <person name="Rocha E.P.C."/>
            <person name="Denamur E."/>
        </authorList>
    </citation>
    <scope>NUCLEOTIDE SEQUENCE [LARGE SCALE GENOMIC DNA]</scope>
    <source>
        <strain>IAI39 / ExPEC</strain>
    </source>
</reference>
<dbReference type="EMBL" id="CU928164">
    <property type="protein sequence ID" value="CAR19747.1"/>
    <property type="molecule type" value="Genomic_DNA"/>
</dbReference>
<dbReference type="RefSeq" id="WP_000681956.1">
    <property type="nucleotide sequence ID" value="NC_011750.1"/>
</dbReference>
<dbReference type="RefSeq" id="YP_002409534.1">
    <property type="nucleotide sequence ID" value="NC_011750.1"/>
</dbReference>
<dbReference type="SMR" id="B7NKK3"/>
<dbReference type="STRING" id="585057.ECIAI39_3631"/>
<dbReference type="KEGG" id="ect:ECIAI39_3631"/>
<dbReference type="PATRIC" id="fig|585057.6.peg.3764"/>
<dbReference type="HOGENOM" id="CLU_053334_0_0_6"/>
<dbReference type="UniPathway" id="UPA00704">
    <property type="reaction ID" value="UER00716"/>
</dbReference>
<dbReference type="Proteomes" id="UP000000749">
    <property type="component" value="Chromosome"/>
</dbReference>
<dbReference type="GO" id="GO:0005886">
    <property type="term" value="C:plasma membrane"/>
    <property type="evidence" value="ECO:0007669"/>
    <property type="project" value="TreeGrafter"/>
</dbReference>
<dbReference type="GO" id="GO:0005975">
    <property type="term" value="P:carbohydrate metabolic process"/>
    <property type="evidence" value="ECO:0007669"/>
    <property type="project" value="InterPro"/>
</dbReference>
<dbReference type="GO" id="GO:2001059">
    <property type="term" value="P:D-tagatose 6-phosphate catabolic process"/>
    <property type="evidence" value="ECO:0007669"/>
    <property type="project" value="UniProtKB-UniRule"/>
</dbReference>
<dbReference type="GO" id="GO:0009401">
    <property type="term" value="P:phosphoenolpyruvate-dependent sugar phosphotransferase system"/>
    <property type="evidence" value="ECO:0007669"/>
    <property type="project" value="TreeGrafter"/>
</dbReference>
<dbReference type="Gene3D" id="3.20.20.70">
    <property type="entry name" value="Aldolase class I"/>
    <property type="match status" value="1"/>
</dbReference>
<dbReference type="Gene3D" id="1.10.400.20">
    <property type="entry name" value="putative tagatose 6-phosphate kinase domain like"/>
    <property type="match status" value="1"/>
</dbReference>
<dbReference type="HAMAP" id="MF_01295">
    <property type="entry name" value="Tagatose_aldol_KbaZ"/>
    <property type="match status" value="1"/>
</dbReference>
<dbReference type="InterPro" id="IPR013785">
    <property type="entry name" value="Aldolase_TIM"/>
</dbReference>
<dbReference type="InterPro" id="IPR012062">
    <property type="entry name" value="GatZ/KbaZ-like"/>
</dbReference>
<dbReference type="InterPro" id="IPR050303">
    <property type="entry name" value="GatZ_KbaZ_carbometab"/>
</dbReference>
<dbReference type="InterPro" id="IPR023435">
    <property type="entry name" value="TagBP_ald_KbaZ"/>
</dbReference>
<dbReference type="NCBIfam" id="TIGR02810">
    <property type="entry name" value="agaZ_gatZ"/>
    <property type="match status" value="1"/>
</dbReference>
<dbReference type="NCBIfam" id="NF012002">
    <property type="entry name" value="PRK15458.1"/>
    <property type="match status" value="1"/>
</dbReference>
<dbReference type="PANTHER" id="PTHR32502:SF2">
    <property type="entry name" value="D-TAGATOSE-1,6-BISPHOSPHATE ALDOLASE SUBUNIT KBAZ"/>
    <property type="match status" value="1"/>
</dbReference>
<dbReference type="PANTHER" id="PTHR32502">
    <property type="entry name" value="N-ACETYLGALACTOSAMINE PERMEASE II COMPONENT-RELATED"/>
    <property type="match status" value="1"/>
</dbReference>
<dbReference type="Pfam" id="PF08013">
    <property type="entry name" value="GatZ_KbaZ-like"/>
    <property type="match status" value="1"/>
</dbReference>
<dbReference type="PIRSF" id="PIRSF009264">
    <property type="entry name" value="TagBP_ald_AgaZ"/>
    <property type="match status" value="1"/>
</dbReference>
<dbReference type="SUPFAM" id="SSF51569">
    <property type="entry name" value="Aldolase"/>
    <property type="match status" value="1"/>
</dbReference>
<feature type="chain" id="PRO_0000372539" description="D-tagatose-1,6-bisphosphate aldolase subunit KbaZ">
    <location>
        <begin position="1"/>
        <end position="426"/>
    </location>
</feature>
<protein>
    <recommendedName>
        <fullName evidence="1">D-tagatose-1,6-bisphosphate aldolase subunit KbaZ</fullName>
    </recommendedName>
</protein>
<evidence type="ECO:0000255" key="1">
    <source>
        <dbReference type="HAMAP-Rule" id="MF_01295"/>
    </source>
</evidence>
<name>KBAZ_ECO7I</name>
<organism>
    <name type="scientific">Escherichia coli O7:K1 (strain IAI39 / ExPEC)</name>
    <dbReference type="NCBI Taxonomy" id="585057"/>
    <lineage>
        <taxon>Bacteria</taxon>
        <taxon>Pseudomonadati</taxon>
        <taxon>Pseudomonadota</taxon>
        <taxon>Gammaproteobacteria</taxon>
        <taxon>Enterobacterales</taxon>
        <taxon>Enterobacteriaceae</taxon>
        <taxon>Escherichia</taxon>
    </lineage>
</organism>
<gene>
    <name evidence="1" type="primary">kbaZ</name>
    <name type="ordered locus">ECIAI39_3631</name>
</gene>
<comment type="function">
    <text evidence="1">Component of the tagatose-1,6-bisphosphate aldolase KbaYZ that is required for full activity and stability of the Y subunit. Could have a chaperone-like function for the proper and stable folding of KbaY. When expressed alone, KbaZ does not show any aldolase activity.</text>
</comment>
<comment type="pathway">
    <text evidence="1">Carbohydrate metabolism; D-tagatose 6-phosphate degradation; D-glyceraldehyde 3-phosphate and glycerone phosphate from D-tagatose 6-phosphate: step 2/2.</text>
</comment>
<comment type="subunit">
    <text evidence="1">Forms a complex with KbaY.</text>
</comment>
<comment type="similarity">
    <text evidence="1">Belongs to the GatZ/KbaZ family. KbaZ subfamily.</text>
</comment>